<reference key="1">
    <citation type="journal article" date="2003" name="Proc. Natl. Acad. Sci. U.S.A.">
        <title>Complete genome sequence and analysis of Wolinella succinogenes.</title>
        <authorList>
            <person name="Baar C."/>
            <person name="Eppinger M."/>
            <person name="Raddatz G."/>
            <person name="Simon J."/>
            <person name="Lanz C."/>
            <person name="Klimmek O."/>
            <person name="Nandakumar R."/>
            <person name="Gross R."/>
            <person name="Rosinus A."/>
            <person name="Keller H."/>
            <person name="Jagtap P."/>
            <person name="Linke B."/>
            <person name="Meyer F."/>
            <person name="Lederer H."/>
            <person name="Schuster S.C."/>
        </authorList>
    </citation>
    <scope>NUCLEOTIDE SEQUENCE [LARGE SCALE GENOMIC DNA]</scope>
    <source>
        <strain>ATCC 29543 / DSM 1740 / CCUG 13145 / JCM 31913 / LMG 7466 / NCTC 11488 / FDC 602W</strain>
    </source>
</reference>
<accession>Q7M9C0</accession>
<protein>
    <recommendedName>
        <fullName>Magnesium transport protein CorA</fullName>
    </recommendedName>
</protein>
<sequence length="321" mass="37271">MMNIFTKREGLVLRESFSSIQTPHSTSNVLWIDLLHPSPAEVSYISQIFHLDIPTKEEREEIEQSARYWEDSESITINTYFLVSLFASTNKKDLHNETVTFLLCKDILFTIRYGEFRTFDEIQNKVLASPKNFQNGYDILSKIFEIRVEQDADMLENTAKDTRGLRSGVFGNQFGYDELLENLSRLQELNMRIRDSLFDKRRAITALLKTDKADIEVKKNLTIVLKDLNSLVEFTTVNMNALDNIQSLFSSQINIEQNKTIKIFTVATVGFMPPTLIASIYGMNFDVMPELHWEWGYPLTLCLMVISTMIPILYFKKKKWL</sequence>
<name>CORA_WOLSU</name>
<evidence type="ECO:0000250" key="1">
    <source>
        <dbReference type="UniProtKB" id="P0ABI4"/>
    </source>
</evidence>
<evidence type="ECO:0000250" key="2">
    <source>
        <dbReference type="UniProtKB" id="Q9WZ31"/>
    </source>
</evidence>
<evidence type="ECO:0000255" key="3"/>
<evidence type="ECO:0000305" key="4"/>
<feature type="chain" id="PRO_0000239108" description="Magnesium transport protein CorA">
    <location>
        <begin position="1"/>
        <end position="321"/>
    </location>
</feature>
<feature type="transmembrane region" description="Helical" evidence="3">
    <location>
        <begin position="263"/>
        <end position="283"/>
    </location>
</feature>
<feature type="transmembrane region" description="Helical" evidence="3">
    <location>
        <begin position="295"/>
        <end position="315"/>
    </location>
</feature>
<feature type="short sequence motif" description="Probable selectivity filter" evidence="2">
    <location>
        <begin position="282"/>
        <end position="284"/>
    </location>
</feature>
<feature type="site" description="Essential for ion permeation" evidence="2">
    <location>
        <position position="258"/>
    </location>
</feature>
<gene>
    <name type="primary">corA</name>
    <name type="ordered locus">WS1032</name>
</gene>
<organism>
    <name type="scientific">Wolinella succinogenes (strain ATCC 29543 / DSM 1740 / CCUG 13145 / JCM 31913 / LMG 7466 / NCTC 11488 / FDC 602W)</name>
    <name type="common">Vibrio succinogenes</name>
    <dbReference type="NCBI Taxonomy" id="273121"/>
    <lineage>
        <taxon>Bacteria</taxon>
        <taxon>Pseudomonadati</taxon>
        <taxon>Campylobacterota</taxon>
        <taxon>Epsilonproteobacteria</taxon>
        <taxon>Campylobacterales</taxon>
        <taxon>Helicobacteraceae</taxon>
        <taxon>Wolinella</taxon>
    </lineage>
</organism>
<keyword id="KW-0997">Cell inner membrane</keyword>
<keyword id="KW-1003">Cell membrane</keyword>
<keyword id="KW-0406">Ion transport</keyword>
<keyword id="KW-0460">Magnesium</keyword>
<keyword id="KW-0472">Membrane</keyword>
<keyword id="KW-1185">Reference proteome</keyword>
<keyword id="KW-0812">Transmembrane</keyword>
<keyword id="KW-1133">Transmembrane helix</keyword>
<keyword id="KW-0813">Transport</keyword>
<proteinExistence type="inferred from homology"/>
<dbReference type="EMBL" id="BX571659">
    <property type="protein sequence ID" value="CAE10132.1"/>
    <property type="molecule type" value="Genomic_DNA"/>
</dbReference>
<dbReference type="RefSeq" id="WP_011138925.1">
    <property type="nucleotide sequence ID" value="NC_005090.1"/>
</dbReference>
<dbReference type="SMR" id="Q7M9C0"/>
<dbReference type="STRING" id="273121.WS1032"/>
<dbReference type="KEGG" id="wsu:WS1032"/>
<dbReference type="eggNOG" id="COG0598">
    <property type="taxonomic scope" value="Bacteria"/>
</dbReference>
<dbReference type="HOGENOM" id="CLU_007127_5_0_7"/>
<dbReference type="Proteomes" id="UP000000422">
    <property type="component" value="Chromosome"/>
</dbReference>
<dbReference type="GO" id="GO:0005886">
    <property type="term" value="C:plasma membrane"/>
    <property type="evidence" value="ECO:0007669"/>
    <property type="project" value="UniProtKB-SubCell"/>
</dbReference>
<dbReference type="GO" id="GO:0015087">
    <property type="term" value="F:cobalt ion transmembrane transporter activity"/>
    <property type="evidence" value="ECO:0007669"/>
    <property type="project" value="InterPro"/>
</dbReference>
<dbReference type="GO" id="GO:0015095">
    <property type="term" value="F:magnesium ion transmembrane transporter activity"/>
    <property type="evidence" value="ECO:0007669"/>
    <property type="project" value="InterPro"/>
</dbReference>
<dbReference type="GO" id="GO:0015099">
    <property type="term" value="F:nickel cation transmembrane transporter activity"/>
    <property type="evidence" value="ECO:0007669"/>
    <property type="project" value="TreeGrafter"/>
</dbReference>
<dbReference type="CDD" id="cd12836">
    <property type="entry name" value="HpCorA-like"/>
    <property type="match status" value="1"/>
</dbReference>
<dbReference type="FunFam" id="1.20.58.340:FF:000001">
    <property type="entry name" value="Magnesium transport protein CorA"/>
    <property type="match status" value="1"/>
</dbReference>
<dbReference type="Gene3D" id="3.30.460.20">
    <property type="entry name" value="CorA soluble domain-like"/>
    <property type="match status" value="1"/>
</dbReference>
<dbReference type="Gene3D" id="1.20.58.340">
    <property type="entry name" value="Magnesium transport protein CorA, transmembrane region"/>
    <property type="match status" value="2"/>
</dbReference>
<dbReference type="InterPro" id="IPR045861">
    <property type="entry name" value="CorA_cytoplasmic_dom"/>
</dbReference>
<dbReference type="InterPro" id="IPR050829">
    <property type="entry name" value="CorA_MIT"/>
</dbReference>
<dbReference type="InterPro" id="IPR045863">
    <property type="entry name" value="CorA_TM1_TM2"/>
</dbReference>
<dbReference type="InterPro" id="IPR004488">
    <property type="entry name" value="Mg/Co-transport_prot_CorA"/>
</dbReference>
<dbReference type="InterPro" id="IPR002523">
    <property type="entry name" value="MgTranspt_CorA/ZnTranspt_ZntB"/>
</dbReference>
<dbReference type="NCBIfam" id="TIGR00383">
    <property type="entry name" value="corA"/>
    <property type="match status" value="1"/>
</dbReference>
<dbReference type="PANTHER" id="PTHR47685">
    <property type="entry name" value="MAGNESIUM TRANSPORT PROTEIN CORA"/>
    <property type="match status" value="1"/>
</dbReference>
<dbReference type="PANTHER" id="PTHR47685:SF1">
    <property type="entry name" value="MAGNESIUM TRANSPORT PROTEIN CORA"/>
    <property type="match status" value="1"/>
</dbReference>
<dbReference type="Pfam" id="PF01544">
    <property type="entry name" value="CorA"/>
    <property type="match status" value="1"/>
</dbReference>
<dbReference type="SUPFAM" id="SSF143865">
    <property type="entry name" value="CorA soluble domain-like"/>
    <property type="match status" value="1"/>
</dbReference>
<dbReference type="SUPFAM" id="SSF144083">
    <property type="entry name" value="Magnesium transport protein CorA, transmembrane region"/>
    <property type="match status" value="1"/>
</dbReference>
<comment type="function">
    <text evidence="1 2">Mediates influx of magnesium ions (By similarity). Alternates between open and closed states. Activated by low cytoplasmic Mg(2+) levels. Inactive when cytoplasmic Mg(2+) levels are high (By similarity).</text>
</comment>
<comment type="catalytic activity">
    <reaction evidence="1">
        <text>Mg(2+)(in) = Mg(2+)(out)</text>
        <dbReference type="Rhea" id="RHEA:29827"/>
        <dbReference type="ChEBI" id="CHEBI:18420"/>
    </reaction>
</comment>
<comment type="subunit">
    <text evidence="2">Homopentamer. In the absence of Mg(2+), interactions between subunits are weakened, and dimers, trimers and tetramers can be observed in vitro (By similarity).</text>
</comment>
<comment type="subcellular location">
    <subcellularLocation>
        <location evidence="1">Cell inner membrane</location>
        <topology evidence="2">Multi-pass membrane protein</topology>
    </subcellularLocation>
</comment>
<comment type="domain">
    <text evidence="2">The central ion permeation pathway is formed by the first transmembrane domain from each of the five subunits. Mg(2+) binding strengthens interactions between subunits and leads to the formation of a symmetrical homopentamer surrounding a closed ion permeation pathway. Low Mg(2+) concentrations trigger both a conformation change within each subunit and a loosening of the interactions between subunits. This results in an open ion conduction pathway. In addition, this results in a less symmetrical shape of the whole complex.</text>
</comment>
<comment type="similarity">
    <text evidence="4">Belongs to the CorA metal ion transporter (MIT) (TC 1.A.35) family.</text>
</comment>